<gene>
    <name evidence="1" type="primary">pdxJ</name>
    <name type="ordered locus">PGN_0671</name>
</gene>
<dbReference type="EC" id="2.6.99.2" evidence="1"/>
<dbReference type="EMBL" id="AP009380">
    <property type="protein sequence ID" value="BAG33190.1"/>
    <property type="molecule type" value="Genomic_DNA"/>
</dbReference>
<dbReference type="RefSeq" id="WP_012457687.1">
    <property type="nucleotide sequence ID" value="NC_010729.1"/>
</dbReference>
<dbReference type="SMR" id="B2RIJ5"/>
<dbReference type="GeneID" id="29255894"/>
<dbReference type="KEGG" id="pgn:PGN_0671"/>
<dbReference type="eggNOG" id="COG0854">
    <property type="taxonomic scope" value="Bacteria"/>
</dbReference>
<dbReference type="HOGENOM" id="CLU_074563_1_0_10"/>
<dbReference type="OrthoDB" id="9806590at2"/>
<dbReference type="BioCyc" id="PGIN431947:G1G2V-737-MONOMER"/>
<dbReference type="UniPathway" id="UPA00244">
    <property type="reaction ID" value="UER00313"/>
</dbReference>
<dbReference type="Proteomes" id="UP000008842">
    <property type="component" value="Chromosome"/>
</dbReference>
<dbReference type="GO" id="GO:0005829">
    <property type="term" value="C:cytosol"/>
    <property type="evidence" value="ECO:0007669"/>
    <property type="project" value="TreeGrafter"/>
</dbReference>
<dbReference type="GO" id="GO:0033856">
    <property type="term" value="F:pyridoxine 5'-phosphate synthase activity"/>
    <property type="evidence" value="ECO:0007669"/>
    <property type="project" value="UniProtKB-EC"/>
</dbReference>
<dbReference type="GO" id="GO:0008615">
    <property type="term" value="P:pyridoxine biosynthetic process"/>
    <property type="evidence" value="ECO:0007669"/>
    <property type="project" value="UniProtKB-UniRule"/>
</dbReference>
<dbReference type="CDD" id="cd00003">
    <property type="entry name" value="PNPsynthase"/>
    <property type="match status" value="1"/>
</dbReference>
<dbReference type="FunFam" id="3.20.20.70:FF:000150">
    <property type="entry name" value="Pyridoxine 5'-phosphate synthase"/>
    <property type="match status" value="1"/>
</dbReference>
<dbReference type="Gene3D" id="3.20.20.70">
    <property type="entry name" value="Aldolase class I"/>
    <property type="match status" value="1"/>
</dbReference>
<dbReference type="HAMAP" id="MF_00279">
    <property type="entry name" value="PdxJ"/>
    <property type="match status" value="1"/>
</dbReference>
<dbReference type="InterPro" id="IPR013785">
    <property type="entry name" value="Aldolase_TIM"/>
</dbReference>
<dbReference type="InterPro" id="IPR004569">
    <property type="entry name" value="PyrdxlP_synth_PdxJ"/>
</dbReference>
<dbReference type="InterPro" id="IPR036130">
    <property type="entry name" value="Pyridoxine-5'_phos_synth"/>
</dbReference>
<dbReference type="NCBIfam" id="TIGR00559">
    <property type="entry name" value="pdxJ"/>
    <property type="match status" value="1"/>
</dbReference>
<dbReference type="NCBIfam" id="NF003625">
    <property type="entry name" value="PRK05265.1-3"/>
    <property type="match status" value="1"/>
</dbReference>
<dbReference type="NCBIfam" id="NF003626">
    <property type="entry name" value="PRK05265.1-4"/>
    <property type="match status" value="1"/>
</dbReference>
<dbReference type="PANTHER" id="PTHR30456">
    <property type="entry name" value="PYRIDOXINE 5'-PHOSPHATE SYNTHASE"/>
    <property type="match status" value="1"/>
</dbReference>
<dbReference type="PANTHER" id="PTHR30456:SF0">
    <property type="entry name" value="PYRIDOXINE 5'-PHOSPHATE SYNTHASE"/>
    <property type="match status" value="1"/>
</dbReference>
<dbReference type="Pfam" id="PF03740">
    <property type="entry name" value="PdxJ"/>
    <property type="match status" value="1"/>
</dbReference>
<dbReference type="SUPFAM" id="SSF63892">
    <property type="entry name" value="Pyridoxine 5'-phosphate synthase"/>
    <property type="match status" value="1"/>
</dbReference>
<organism>
    <name type="scientific">Porphyromonas gingivalis (strain ATCC 33277 / DSM 20709 / CIP 103683 / JCM 12257 / NCTC 11834 / 2561)</name>
    <dbReference type="NCBI Taxonomy" id="431947"/>
    <lineage>
        <taxon>Bacteria</taxon>
        <taxon>Pseudomonadati</taxon>
        <taxon>Bacteroidota</taxon>
        <taxon>Bacteroidia</taxon>
        <taxon>Bacteroidales</taxon>
        <taxon>Porphyromonadaceae</taxon>
        <taxon>Porphyromonas</taxon>
    </lineage>
</organism>
<accession>B2RIJ5</accession>
<evidence type="ECO:0000255" key="1">
    <source>
        <dbReference type="HAMAP-Rule" id="MF_00279"/>
    </source>
</evidence>
<proteinExistence type="inferred from homology"/>
<sequence>MTRLSVNVNKIATLRNARGGNVPDVLRVALDCERFGAQGITVHPRPDERHIRRSDVYDLKKALTTEFNIEGNPDERFIRLIEEIRPEQVTMVPDAPDVLTSNAGWDVARNYDHLCRLVEQFHAWGIRTSIFIDTDLDNISWAAKTGTDRIELYTEPYAAAYHKDMAAAVQPYVKASAHAHSLGLGINAGHDLNLDNLRYFAERLPYLDEVSIGHALIADALYLGLEETIRQYRDQLAL</sequence>
<name>PDXJ_PORG3</name>
<reference key="1">
    <citation type="journal article" date="2008" name="DNA Res.">
        <title>Determination of the genome sequence of Porphyromonas gingivalis strain ATCC 33277 and genomic comparison with strain W83 revealed extensive genome rearrangements in P. gingivalis.</title>
        <authorList>
            <person name="Naito M."/>
            <person name="Hirakawa H."/>
            <person name="Yamashita A."/>
            <person name="Ohara N."/>
            <person name="Shoji M."/>
            <person name="Yukitake H."/>
            <person name="Nakayama K."/>
            <person name="Toh H."/>
            <person name="Yoshimura F."/>
            <person name="Kuhara S."/>
            <person name="Hattori M."/>
            <person name="Hayashi T."/>
            <person name="Nakayama K."/>
        </authorList>
    </citation>
    <scope>NUCLEOTIDE SEQUENCE [LARGE SCALE GENOMIC DNA]</scope>
    <source>
        <strain>ATCC 33277 / DSM 20709 / CIP 103683 / JCM 12257 / NCTC 11834 / 2561</strain>
    </source>
</reference>
<protein>
    <recommendedName>
        <fullName evidence="1">Pyridoxine 5'-phosphate synthase</fullName>
        <shortName evidence="1">PNP synthase</shortName>
        <ecNumber evidence="1">2.6.99.2</ecNumber>
    </recommendedName>
</protein>
<keyword id="KW-0963">Cytoplasm</keyword>
<keyword id="KW-0664">Pyridoxine biosynthesis</keyword>
<keyword id="KW-0808">Transferase</keyword>
<feature type="chain" id="PRO_1000114820" description="Pyridoxine 5'-phosphate synthase">
    <location>
        <begin position="1"/>
        <end position="238"/>
    </location>
</feature>
<feature type="active site" description="Proton acceptor" evidence="1">
    <location>
        <position position="43"/>
    </location>
</feature>
<feature type="active site" description="Proton acceptor" evidence="1">
    <location>
        <position position="70"/>
    </location>
</feature>
<feature type="active site" description="Proton donor" evidence="1">
    <location>
        <position position="190"/>
    </location>
</feature>
<feature type="binding site" evidence="1">
    <location>
        <position position="7"/>
    </location>
    <ligand>
        <name>3-amino-2-oxopropyl phosphate</name>
        <dbReference type="ChEBI" id="CHEBI:57279"/>
    </ligand>
</feature>
<feature type="binding site" evidence="1">
    <location>
        <position position="18"/>
    </location>
    <ligand>
        <name>3-amino-2-oxopropyl phosphate</name>
        <dbReference type="ChEBI" id="CHEBI:57279"/>
    </ligand>
</feature>
<feature type="binding site" evidence="1">
    <location>
        <position position="45"/>
    </location>
    <ligand>
        <name>1-deoxy-D-xylulose 5-phosphate</name>
        <dbReference type="ChEBI" id="CHEBI:57792"/>
    </ligand>
</feature>
<feature type="binding site" evidence="1">
    <location>
        <position position="50"/>
    </location>
    <ligand>
        <name>1-deoxy-D-xylulose 5-phosphate</name>
        <dbReference type="ChEBI" id="CHEBI:57792"/>
    </ligand>
</feature>
<feature type="binding site" evidence="1">
    <location>
        <position position="100"/>
    </location>
    <ligand>
        <name>1-deoxy-D-xylulose 5-phosphate</name>
        <dbReference type="ChEBI" id="CHEBI:57792"/>
    </ligand>
</feature>
<feature type="binding site" evidence="1">
    <location>
        <position position="191"/>
    </location>
    <ligand>
        <name>3-amino-2-oxopropyl phosphate</name>
        <dbReference type="ChEBI" id="CHEBI:57279"/>
    </ligand>
</feature>
<feature type="binding site" evidence="1">
    <location>
        <begin position="213"/>
        <end position="214"/>
    </location>
    <ligand>
        <name>3-amino-2-oxopropyl phosphate</name>
        <dbReference type="ChEBI" id="CHEBI:57279"/>
    </ligand>
</feature>
<feature type="site" description="Transition state stabilizer" evidence="1">
    <location>
        <position position="151"/>
    </location>
</feature>
<comment type="function">
    <text evidence="1">Catalyzes the complicated ring closure reaction between the two acyclic compounds 1-deoxy-D-xylulose-5-phosphate (DXP) and 3-amino-2-oxopropyl phosphate (1-amino-acetone-3-phosphate or AAP) to form pyridoxine 5'-phosphate (PNP) and inorganic phosphate.</text>
</comment>
<comment type="catalytic activity">
    <reaction evidence="1">
        <text>3-amino-2-oxopropyl phosphate + 1-deoxy-D-xylulose 5-phosphate = pyridoxine 5'-phosphate + phosphate + 2 H2O + H(+)</text>
        <dbReference type="Rhea" id="RHEA:15265"/>
        <dbReference type="ChEBI" id="CHEBI:15377"/>
        <dbReference type="ChEBI" id="CHEBI:15378"/>
        <dbReference type="ChEBI" id="CHEBI:43474"/>
        <dbReference type="ChEBI" id="CHEBI:57279"/>
        <dbReference type="ChEBI" id="CHEBI:57792"/>
        <dbReference type="ChEBI" id="CHEBI:58589"/>
        <dbReference type="EC" id="2.6.99.2"/>
    </reaction>
</comment>
<comment type="pathway">
    <text evidence="1">Cofactor biosynthesis; pyridoxine 5'-phosphate biosynthesis; pyridoxine 5'-phosphate from D-erythrose 4-phosphate: step 5/5.</text>
</comment>
<comment type="subunit">
    <text evidence="1">Homooctamer; tetramer of dimers.</text>
</comment>
<comment type="subcellular location">
    <subcellularLocation>
        <location evidence="1">Cytoplasm</location>
    </subcellularLocation>
</comment>
<comment type="similarity">
    <text evidence="1">Belongs to the PNP synthase family.</text>
</comment>